<comment type="catalytic activity">
    <reaction evidence="1">
        <text>L-citrulline + L-aspartate + ATP = 2-(N(omega)-L-arginino)succinate + AMP + diphosphate + H(+)</text>
        <dbReference type="Rhea" id="RHEA:10932"/>
        <dbReference type="ChEBI" id="CHEBI:15378"/>
        <dbReference type="ChEBI" id="CHEBI:29991"/>
        <dbReference type="ChEBI" id="CHEBI:30616"/>
        <dbReference type="ChEBI" id="CHEBI:33019"/>
        <dbReference type="ChEBI" id="CHEBI:57472"/>
        <dbReference type="ChEBI" id="CHEBI:57743"/>
        <dbReference type="ChEBI" id="CHEBI:456215"/>
        <dbReference type="EC" id="6.3.4.5"/>
    </reaction>
</comment>
<comment type="pathway">
    <text evidence="1">Amino-acid biosynthesis; L-arginine biosynthesis; L-arginine from L-ornithine and carbamoyl phosphate: step 2/3.</text>
</comment>
<comment type="subunit">
    <text evidence="1">Homotetramer.</text>
</comment>
<comment type="subcellular location">
    <subcellularLocation>
        <location evidence="1">Cytoplasm</location>
    </subcellularLocation>
</comment>
<comment type="similarity">
    <text evidence="1">Belongs to the argininosuccinate synthase family. Type 1 subfamily.</text>
</comment>
<keyword id="KW-0028">Amino-acid biosynthesis</keyword>
<keyword id="KW-0055">Arginine biosynthesis</keyword>
<keyword id="KW-0067">ATP-binding</keyword>
<keyword id="KW-0963">Cytoplasm</keyword>
<keyword id="KW-0436">Ligase</keyword>
<keyword id="KW-0547">Nucleotide-binding</keyword>
<sequence length="401" mass="44709">MDKKKVVLAYSGGLDTSVAIKWLQEKNYDIIALCLDLGEGKDLAFVKEKALSVGAIKSYMIDVQEEFANEYALMAMQAHTLYEGKYPLVSALSRPLIAKKLVEIAEQEGATAVAHGCTGKGNDQVRFEVSIQALNPYLEVIAPVREWKWSREEEIAYAKENNVPIPINLDSPFSIDQNLWGRSNECGILEDPWAAPPEDAYEMTLALEDTPNKPEFVEIGFEAGVPTTLNGTAYPLSELIKTLNALAGKHGVGRIDHVENRLVGIKSREVYECPAAMTLITAHKELEDLTLVKEVAHFKPMIEQKITELIYNGLWFSPLKQALHAFLQETQKNVTGMVRVKLFKGHAIVEGRKSEYSLYDEKLATYTAQDEFNHDAAVGFISLFGLPTKVYSQVNQKKVEA</sequence>
<proteinExistence type="inferred from homology"/>
<name>ASSY_BACHK</name>
<organism>
    <name type="scientific">Bacillus thuringiensis subsp. konkukian (strain 97-27)</name>
    <dbReference type="NCBI Taxonomy" id="281309"/>
    <lineage>
        <taxon>Bacteria</taxon>
        <taxon>Bacillati</taxon>
        <taxon>Bacillota</taxon>
        <taxon>Bacilli</taxon>
        <taxon>Bacillales</taxon>
        <taxon>Bacillaceae</taxon>
        <taxon>Bacillus</taxon>
        <taxon>Bacillus cereus group</taxon>
    </lineage>
</organism>
<reference key="1">
    <citation type="journal article" date="2006" name="J. Bacteriol.">
        <title>Pathogenomic sequence analysis of Bacillus cereus and Bacillus thuringiensis isolates closely related to Bacillus anthracis.</title>
        <authorList>
            <person name="Han C.S."/>
            <person name="Xie G."/>
            <person name="Challacombe J.F."/>
            <person name="Altherr M.R."/>
            <person name="Bhotika S.S."/>
            <person name="Bruce D."/>
            <person name="Campbell C.S."/>
            <person name="Campbell M.L."/>
            <person name="Chen J."/>
            <person name="Chertkov O."/>
            <person name="Cleland C."/>
            <person name="Dimitrijevic M."/>
            <person name="Doggett N.A."/>
            <person name="Fawcett J.J."/>
            <person name="Glavina T."/>
            <person name="Goodwin L.A."/>
            <person name="Hill K.K."/>
            <person name="Hitchcock P."/>
            <person name="Jackson P.J."/>
            <person name="Keim P."/>
            <person name="Kewalramani A.R."/>
            <person name="Longmire J."/>
            <person name="Lucas S."/>
            <person name="Malfatti S."/>
            <person name="McMurry K."/>
            <person name="Meincke L.J."/>
            <person name="Misra M."/>
            <person name="Moseman B.L."/>
            <person name="Mundt M."/>
            <person name="Munk A.C."/>
            <person name="Okinaka R.T."/>
            <person name="Parson-Quintana B."/>
            <person name="Reilly L.P."/>
            <person name="Richardson P."/>
            <person name="Robinson D.L."/>
            <person name="Rubin E."/>
            <person name="Saunders E."/>
            <person name="Tapia R."/>
            <person name="Tesmer J.G."/>
            <person name="Thayer N."/>
            <person name="Thompson L.S."/>
            <person name="Tice H."/>
            <person name="Ticknor L.O."/>
            <person name="Wills P.L."/>
            <person name="Brettin T.S."/>
            <person name="Gilna P."/>
        </authorList>
    </citation>
    <scope>NUCLEOTIDE SEQUENCE [LARGE SCALE GENOMIC DNA]</scope>
    <source>
        <strain>97-27</strain>
    </source>
</reference>
<gene>
    <name evidence="1" type="primary">argG</name>
    <name type="ordered locus">BT9727_4364</name>
</gene>
<protein>
    <recommendedName>
        <fullName evidence="1">Argininosuccinate synthase</fullName>
        <ecNumber evidence="1">6.3.4.5</ecNumber>
    </recommendedName>
    <alternativeName>
        <fullName evidence="1">Citrulline--aspartate ligase</fullName>
    </alternativeName>
</protein>
<accession>Q6HCP7</accession>
<dbReference type="EC" id="6.3.4.5" evidence="1"/>
<dbReference type="EMBL" id="AE017355">
    <property type="protein sequence ID" value="AAT63567.1"/>
    <property type="molecule type" value="Genomic_DNA"/>
</dbReference>
<dbReference type="RefSeq" id="WP_000358518.1">
    <property type="nucleotide sequence ID" value="NC_005957.1"/>
</dbReference>
<dbReference type="RefSeq" id="YP_038679.1">
    <property type="nucleotide sequence ID" value="NC_005957.1"/>
</dbReference>
<dbReference type="SMR" id="Q6HCP7"/>
<dbReference type="KEGG" id="btk:BT9727_4364"/>
<dbReference type="PATRIC" id="fig|281309.8.peg.4651"/>
<dbReference type="HOGENOM" id="CLU_032784_4_2_9"/>
<dbReference type="UniPathway" id="UPA00068">
    <property type="reaction ID" value="UER00113"/>
</dbReference>
<dbReference type="Proteomes" id="UP000001301">
    <property type="component" value="Chromosome"/>
</dbReference>
<dbReference type="GO" id="GO:0005737">
    <property type="term" value="C:cytoplasm"/>
    <property type="evidence" value="ECO:0007669"/>
    <property type="project" value="UniProtKB-SubCell"/>
</dbReference>
<dbReference type="GO" id="GO:0004055">
    <property type="term" value="F:argininosuccinate synthase activity"/>
    <property type="evidence" value="ECO:0007669"/>
    <property type="project" value="UniProtKB-UniRule"/>
</dbReference>
<dbReference type="GO" id="GO:0005524">
    <property type="term" value="F:ATP binding"/>
    <property type="evidence" value="ECO:0007669"/>
    <property type="project" value="UniProtKB-UniRule"/>
</dbReference>
<dbReference type="GO" id="GO:0000053">
    <property type="term" value="P:argininosuccinate metabolic process"/>
    <property type="evidence" value="ECO:0007669"/>
    <property type="project" value="TreeGrafter"/>
</dbReference>
<dbReference type="GO" id="GO:0006526">
    <property type="term" value="P:L-arginine biosynthetic process"/>
    <property type="evidence" value="ECO:0007669"/>
    <property type="project" value="UniProtKB-UniRule"/>
</dbReference>
<dbReference type="GO" id="GO:0000050">
    <property type="term" value="P:urea cycle"/>
    <property type="evidence" value="ECO:0007669"/>
    <property type="project" value="TreeGrafter"/>
</dbReference>
<dbReference type="CDD" id="cd01999">
    <property type="entry name" value="ASS"/>
    <property type="match status" value="1"/>
</dbReference>
<dbReference type="FunFam" id="1.20.5.470:FF:000002">
    <property type="entry name" value="Argininosuccinate synthase"/>
    <property type="match status" value="1"/>
</dbReference>
<dbReference type="FunFam" id="3.40.50.620:FF:000038">
    <property type="entry name" value="Argininosuccinate synthase"/>
    <property type="match status" value="1"/>
</dbReference>
<dbReference type="FunFam" id="3.90.1260.10:FF:000007">
    <property type="entry name" value="Argininosuccinate synthase"/>
    <property type="match status" value="1"/>
</dbReference>
<dbReference type="Gene3D" id="3.90.1260.10">
    <property type="entry name" value="Argininosuccinate synthetase, chain A, domain 2"/>
    <property type="match status" value="1"/>
</dbReference>
<dbReference type="Gene3D" id="3.40.50.620">
    <property type="entry name" value="HUPs"/>
    <property type="match status" value="1"/>
</dbReference>
<dbReference type="Gene3D" id="1.20.5.470">
    <property type="entry name" value="Single helix bin"/>
    <property type="match status" value="1"/>
</dbReference>
<dbReference type="HAMAP" id="MF_00005">
    <property type="entry name" value="Arg_succ_synth_type1"/>
    <property type="match status" value="1"/>
</dbReference>
<dbReference type="InterPro" id="IPR048268">
    <property type="entry name" value="Arginosuc_syn_C"/>
</dbReference>
<dbReference type="InterPro" id="IPR048267">
    <property type="entry name" value="Arginosuc_syn_N"/>
</dbReference>
<dbReference type="InterPro" id="IPR001518">
    <property type="entry name" value="Arginosuc_synth"/>
</dbReference>
<dbReference type="InterPro" id="IPR018223">
    <property type="entry name" value="Arginosuc_synth_CS"/>
</dbReference>
<dbReference type="InterPro" id="IPR023434">
    <property type="entry name" value="Arginosuc_synth_type_1_subfam"/>
</dbReference>
<dbReference type="InterPro" id="IPR024074">
    <property type="entry name" value="AS_cat/multimer_dom_body"/>
</dbReference>
<dbReference type="InterPro" id="IPR014729">
    <property type="entry name" value="Rossmann-like_a/b/a_fold"/>
</dbReference>
<dbReference type="NCBIfam" id="TIGR00032">
    <property type="entry name" value="argG"/>
    <property type="match status" value="1"/>
</dbReference>
<dbReference type="NCBIfam" id="NF001770">
    <property type="entry name" value="PRK00509.1"/>
    <property type="match status" value="1"/>
</dbReference>
<dbReference type="PANTHER" id="PTHR11587">
    <property type="entry name" value="ARGININOSUCCINATE SYNTHASE"/>
    <property type="match status" value="1"/>
</dbReference>
<dbReference type="PANTHER" id="PTHR11587:SF2">
    <property type="entry name" value="ARGININOSUCCINATE SYNTHASE"/>
    <property type="match status" value="1"/>
</dbReference>
<dbReference type="Pfam" id="PF20979">
    <property type="entry name" value="Arginosuc_syn_C"/>
    <property type="match status" value="1"/>
</dbReference>
<dbReference type="Pfam" id="PF00764">
    <property type="entry name" value="Arginosuc_synth"/>
    <property type="match status" value="1"/>
</dbReference>
<dbReference type="SUPFAM" id="SSF52402">
    <property type="entry name" value="Adenine nucleotide alpha hydrolases-like"/>
    <property type="match status" value="1"/>
</dbReference>
<dbReference type="SUPFAM" id="SSF69864">
    <property type="entry name" value="Argininosuccinate synthetase, C-terminal domain"/>
    <property type="match status" value="1"/>
</dbReference>
<dbReference type="PROSITE" id="PS00564">
    <property type="entry name" value="ARGININOSUCCIN_SYN_1"/>
    <property type="match status" value="1"/>
</dbReference>
<dbReference type="PROSITE" id="PS00565">
    <property type="entry name" value="ARGININOSUCCIN_SYN_2"/>
    <property type="match status" value="1"/>
</dbReference>
<evidence type="ECO:0000255" key="1">
    <source>
        <dbReference type="HAMAP-Rule" id="MF_00005"/>
    </source>
</evidence>
<feature type="chain" id="PRO_0000148569" description="Argininosuccinate synthase">
    <location>
        <begin position="1"/>
        <end position="401"/>
    </location>
</feature>
<feature type="binding site" evidence="1">
    <location>
        <begin position="9"/>
        <end position="17"/>
    </location>
    <ligand>
        <name>ATP</name>
        <dbReference type="ChEBI" id="CHEBI:30616"/>
    </ligand>
</feature>
<feature type="binding site" evidence="1">
    <location>
        <position position="86"/>
    </location>
    <ligand>
        <name>L-citrulline</name>
        <dbReference type="ChEBI" id="CHEBI:57743"/>
    </ligand>
</feature>
<feature type="binding site" evidence="1">
    <location>
        <position position="116"/>
    </location>
    <ligand>
        <name>ATP</name>
        <dbReference type="ChEBI" id="CHEBI:30616"/>
    </ligand>
</feature>
<feature type="binding site" evidence="1">
    <location>
        <position position="118"/>
    </location>
    <ligand>
        <name>L-aspartate</name>
        <dbReference type="ChEBI" id="CHEBI:29991"/>
    </ligand>
</feature>
<feature type="binding site" evidence="1">
    <location>
        <position position="122"/>
    </location>
    <ligand>
        <name>L-aspartate</name>
        <dbReference type="ChEBI" id="CHEBI:29991"/>
    </ligand>
</feature>
<feature type="binding site" evidence="1">
    <location>
        <position position="122"/>
    </location>
    <ligand>
        <name>L-citrulline</name>
        <dbReference type="ChEBI" id="CHEBI:57743"/>
    </ligand>
</feature>
<feature type="binding site" evidence="1">
    <location>
        <position position="123"/>
    </location>
    <ligand>
        <name>L-aspartate</name>
        <dbReference type="ChEBI" id="CHEBI:29991"/>
    </ligand>
</feature>
<feature type="binding site" evidence="1">
    <location>
        <position position="126"/>
    </location>
    <ligand>
        <name>L-citrulline</name>
        <dbReference type="ChEBI" id="CHEBI:57743"/>
    </ligand>
</feature>
<feature type="binding site" evidence="1">
    <location>
        <position position="174"/>
    </location>
    <ligand>
        <name>L-citrulline</name>
        <dbReference type="ChEBI" id="CHEBI:57743"/>
    </ligand>
</feature>
<feature type="binding site" evidence="1">
    <location>
        <position position="183"/>
    </location>
    <ligand>
        <name>L-citrulline</name>
        <dbReference type="ChEBI" id="CHEBI:57743"/>
    </ligand>
</feature>
<feature type="binding site" evidence="1">
    <location>
        <position position="259"/>
    </location>
    <ligand>
        <name>L-citrulline</name>
        <dbReference type="ChEBI" id="CHEBI:57743"/>
    </ligand>
</feature>
<feature type="binding site" evidence="1">
    <location>
        <position position="271"/>
    </location>
    <ligand>
        <name>L-citrulline</name>
        <dbReference type="ChEBI" id="CHEBI:57743"/>
    </ligand>
</feature>